<name>LEPA_HELPY</name>
<comment type="function">
    <text evidence="1">Required for accurate and efficient protein synthesis under certain stress conditions. May act as a fidelity factor of the translation reaction, by catalyzing a one-codon backward translocation of tRNAs on improperly translocated ribosomes. Back-translocation proceeds from a post-translocation (POST) complex to a pre-translocation (PRE) complex, thus giving elongation factor G a second chance to translocate the tRNAs correctly. Binds to ribosomes in a GTP-dependent manner.</text>
</comment>
<comment type="catalytic activity">
    <reaction evidence="1">
        <text>GTP + H2O = GDP + phosphate + H(+)</text>
        <dbReference type="Rhea" id="RHEA:19669"/>
        <dbReference type="ChEBI" id="CHEBI:15377"/>
        <dbReference type="ChEBI" id="CHEBI:15378"/>
        <dbReference type="ChEBI" id="CHEBI:37565"/>
        <dbReference type="ChEBI" id="CHEBI:43474"/>
        <dbReference type="ChEBI" id="CHEBI:58189"/>
        <dbReference type="EC" id="3.6.5.n1"/>
    </reaction>
</comment>
<comment type="subcellular location">
    <subcellularLocation>
        <location evidence="1">Cell inner membrane</location>
        <topology evidence="1">Peripheral membrane protein</topology>
        <orientation evidence="1">Cytoplasmic side</orientation>
    </subcellularLocation>
</comment>
<comment type="similarity">
    <text evidence="1">Belongs to the TRAFAC class translation factor GTPase superfamily. Classic translation factor GTPase family. LepA subfamily.</text>
</comment>
<feature type="chain" id="PRO_0000176282" description="Elongation factor 4">
    <location>
        <begin position="1"/>
        <end position="602"/>
    </location>
</feature>
<feature type="domain" description="tr-type G">
    <location>
        <begin position="8"/>
        <end position="189"/>
    </location>
</feature>
<feature type="binding site" evidence="1">
    <location>
        <begin position="20"/>
        <end position="25"/>
    </location>
    <ligand>
        <name>GTP</name>
        <dbReference type="ChEBI" id="CHEBI:37565"/>
    </ligand>
</feature>
<feature type="binding site" evidence="1">
    <location>
        <begin position="136"/>
        <end position="139"/>
    </location>
    <ligand>
        <name>GTP</name>
        <dbReference type="ChEBI" id="CHEBI:37565"/>
    </ligand>
</feature>
<gene>
    <name evidence="1" type="primary">lepA</name>
    <name type="ordered locus">HP_0355</name>
</gene>
<accession>O25122</accession>
<dbReference type="EC" id="3.6.5.n1" evidence="1"/>
<dbReference type="EMBL" id="AE000511">
    <property type="protein sequence ID" value="AAD07423.1"/>
    <property type="molecule type" value="Genomic_DNA"/>
</dbReference>
<dbReference type="PIR" id="C64564">
    <property type="entry name" value="C64564"/>
</dbReference>
<dbReference type="RefSeq" id="NP_207153.1">
    <property type="nucleotide sequence ID" value="NC_000915.1"/>
</dbReference>
<dbReference type="SMR" id="O25122"/>
<dbReference type="DIP" id="DIP-3049N"/>
<dbReference type="FunCoup" id="O25122">
    <property type="interactions" value="370"/>
</dbReference>
<dbReference type="IntAct" id="O25122">
    <property type="interactions" value="11"/>
</dbReference>
<dbReference type="MINT" id="O25122"/>
<dbReference type="STRING" id="85962.HP_0355"/>
<dbReference type="PaxDb" id="85962-C694_01800"/>
<dbReference type="EnsemblBacteria" id="AAD07423">
    <property type="protein sequence ID" value="AAD07423"/>
    <property type="gene ID" value="HP_0355"/>
</dbReference>
<dbReference type="KEGG" id="hpy:HP_0355"/>
<dbReference type="PATRIC" id="fig|85962.8.peg.368"/>
<dbReference type="eggNOG" id="COG0481">
    <property type="taxonomic scope" value="Bacteria"/>
</dbReference>
<dbReference type="InParanoid" id="O25122"/>
<dbReference type="OrthoDB" id="9804431at2"/>
<dbReference type="PhylomeDB" id="O25122"/>
<dbReference type="Proteomes" id="UP000000429">
    <property type="component" value="Chromosome"/>
</dbReference>
<dbReference type="GO" id="GO:0005886">
    <property type="term" value="C:plasma membrane"/>
    <property type="evidence" value="ECO:0007669"/>
    <property type="project" value="UniProtKB-SubCell"/>
</dbReference>
<dbReference type="GO" id="GO:0005525">
    <property type="term" value="F:GTP binding"/>
    <property type="evidence" value="ECO:0007669"/>
    <property type="project" value="UniProtKB-UniRule"/>
</dbReference>
<dbReference type="GO" id="GO:0003924">
    <property type="term" value="F:GTPase activity"/>
    <property type="evidence" value="ECO:0007669"/>
    <property type="project" value="UniProtKB-UniRule"/>
</dbReference>
<dbReference type="GO" id="GO:0043022">
    <property type="term" value="F:ribosome binding"/>
    <property type="evidence" value="ECO:0000318"/>
    <property type="project" value="GO_Central"/>
</dbReference>
<dbReference type="GO" id="GO:0003746">
    <property type="term" value="F:translation elongation factor activity"/>
    <property type="evidence" value="ECO:0007669"/>
    <property type="project" value="UniProtKB-UniRule"/>
</dbReference>
<dbReference type="GO" id="GO:0045727">
    <property type="term" value="P:positive regulation of translation"/>
    <property type="evidence" value="ECO:0000318"/>
    <property type="project" value="GO_Central"/>
</dbReference>
<dbReference type="CDD" id="cd03699">
    <property type="entry name" value="EF4_II"/>
    <property type="match status" value="1"/>
</dbReference>
<dbReference type="CDD" id="cd16260">
    <property type="entry name" value="EF4_III"/>
    <property type="match status" value="1"/>
</dbReference>
<dbReference type="CDD" id="cd01890">
    <property type="entry name" value="LepA"/>
    <property type="match status" value="1"/>
</dbReference>
<dbReference type="CDD" id="cd03709">
    <property type="entry name" value="lepA_C"/>
    <property type="match status" value="1"/>
</dbReference>
<dbReference type="FunFam" id="3.40.50.300:FF:000078">
    <property type="entry name" value="Elongation factor 4"/>
    <property type="match status" value="1"/>
</dbReference>
<dbReference type="FunFam" id="3.30.70.240:FF:000007">
    <property type="entry name" value="Translation factor GUF1, mitochondrial"/>
    <property type="match status" value="1"/>
</dbReference>
<dbReference type="FunFam" id="3.30.70.2570:FF:000001">
    <property type="entry name" value="Translation factor GUF1, mitochondrial"/>
    <property type="match status" value="1"/>
</dbReference>
<dbReference type="FunFam" id="3.30.70.870:FF:000004">
    <property type="entry name" value="Translation factor GUF1, mitochondrial"/>
    <property type="match status" value="1"/>
</dbReference>
<dbReference type="Gene3D" id="3.30.70.240">
    <property type="match status" value="1"/>
</dbReference>
<dbReference type="Gene3D" id="3.30.70.2570">
    <property type="entry name" value="Elongation factor 4, C-terminal domain"/>
    <property type="match status" value="1"/>
</dbReference>
<dbReference type="Gene3D" id="3.30.70.870">
    <property type="entry name" value="Elongation Factor G (Translational Gtpase), domain 3"/>
    <property type="match status" value="1"/>
</dbReference>
<dbReference type="Gene3D" id="3.40.50.300">
    <property type="entry name" value="P-loop containing nucleotide triphosphate hydrolases"/>
    <property type="match status" value="1"/>
</dbReference>
<dbReference type="Gene3D" id="2.40.30.10">
    <property type="entry name" value="Translation factors"/>
    <property type="match status" value="1"/>
</dbReference>
<dbReference type="HAMAP" id="MF_00071">
    <property type="entry name" value="LepA"/>
    <property type="match status" value="1"/>
</dbReference>
<dbReference type="InterPro" id="IPR006297">
    <property type="entry name" value="EF-4"/>
</dbReference>
<dbReference type="InterPro" id="IPR035647">
    <property type="entry name" value="EFG_III/V"/>
</dbReference>
<dbReference type="InterPro" id="IPR000640">
    <property type="entry name" value="EFG_V-like"/>
</dbReference>
<dbReference type="InterPro" id="IPR004161">
    <property type="entry name" value="EFTu-like_2"/>
</dbReference>
<dbReference type="InterPro" id="IPR031157">
    <property type="entry name" value="G_TR_CS"/>
</dbReference>
<dbReference type="InterPro" id="IPR038363">
    <property type="entry name" value="LepA_C_sf"/>
</dbReference>
<dbReference type="InterPro" id="IPR013842">
    <property type="entry name" value="LepA_CTD"/>
</dbReference>
<dbReference type="InterPro" id="IPR035654">
    <property type="entry name" value="LepA_IV"/>
</dbReference>
<dbReference type="InterPro" id="IPR027417">
    <property type="entry name" value="P-loop_NTPase"/>
</dbReference>
<dbReference type="InterPro" id="IPR005225">
    <property type="entry name" value="Small_GTP-bd"/>
</dbReference>
<dbReference type="InterPro" id="IPR000795">
    <property type="entry name" value="T_Tr_GTP-bd_dom"/>
</dbReference>
<dbReference type="InterPro" id="IPR009000">
    <property type="entry name" value="Transl_B-barrel_sf"/>
</dbReference>
<dbReference type="NCBIfam" id="TIGR01393">
    <property type="entry name" value="lepA"/>
    <property type="match status" value="1"/>
</dbReference>
<dbReference type="NCBIfam" id="TIGR00231">
    <property type="entry name" value="small_GTP"/>
    <property type="match status" value="1"/>
</dbReference>
<dbReference type="PANTHER" id="PTHR43512:SF4">
    <property type="entry name" value="TRANSLATION FACTOR GUF1 HOMOLOG, CHLOROPLASTIC"/>
    <property type="match status" value="1"/>
</dbReference>
<dbReference type="PANTHER" id="PTHR43512">
    <property type="entry name" value="TRANSLATION FACTOR GUF1-RELATED"/>
    <property type="match status" value="1"/>
</dbReference>
<dbReference type="Pfam" id="PF00679">
    <property type="entry name" value="EFG_C"/>
    <property type="match status" value="1"/>
</dbReference>
<dbReference type="Pfam" id="PF00009">
    <property type="entry name" value="GTP_EFTU"/>
    <property type="match status" value="1"/>
</dbReference>
<dbReference type="Pfam" id="PF03144">
    <property type="entry name" value="GTP_EFTU_D2"/>
    <property type="match status" value="1"/>
</dbReference>
<dbReference type="Pfam" id="PF06421">
    <property type="entry name" value="LepA_C"/>
    <property type="match status" value="1"/>
</dbReference>
<dbReference type="PRINTS" id="PR00315">
    <property type="entry name" value="ELONGATNFCT"/>
</dbReference>
<dbReference type="SUPFAM" id="SSF54980">
    <property type="entry name" value="EF-G C-terminal domain-like"/>
    <property type="match status" value="2"/>
</dbReference>
<dbReference type="SUPFAM" id="SSF52540">
    <property type="entry name" value="P-loop containing nucleoside triphosphate hydrolases"/>
    <property type="match status" value="1"/>
</dbReference>
<dbReference type="SUPFAM" id="SSF50447">
    <property type="entry name" value="Translation proteins"/>
    <property type="match status" value="1"/>
</dbReference>
<dbReference type="PROSITE" id="PS00301">
    <property type="entry name" value="G_TR_1"/>
    <property type="match status" value="1"/>
</dbReference>
<dbReference type="PROSITE" id="PS51722">
    <property type="entry name" value="G_TR_2"/>
    <property type="match status" value="1"/>
</dbReference>
<reference key="1">
    <citation type="journal article" date="1997" name="Nature">
        <title>The complete genome sequence of the gastric pathogen Helicobacter pylori.</title>
        <authorList>
            <person name="Tomb J.-F."/>
            <person name="White O."/>
            <person name="Kerlavage A.R."/>
            <person name="Clayton R.A."/>
            <person name="Sutton G.G."/>
            <person name="Fleischmann R.D."/>
            <person name="Ketchum K.A."/>
            <person name="Klenk H.-P."/>
            <person name="Gill S.R."/>
            <person name="Dougherty B.A."/>
            <person name="Nelson K.E."/>
            <person name="Quackenbush J."/>
            <person name="Zhou L."/>
            <person name="Kirkness E.F."/>
            <person name="Peterson S.N."/>
            <person name="Loftus B.J."/>
            <person name="Richardson D.L."/>
            <person name="Dodson R.J."/>
            <person name="Khalak H.G."/>
            <person name="Glodek A."/>
            <person name="McKenney K."/>
            <person name="FitzGerald L.M."/>
            <person name="Lee N."/>
            <person name="Adams M.D."/>
            <person name="Hickey E.K."/>
            <person name="Berg D.E."/>
            <person name="Gocayne J.D."/>
            <person name="Utterback T.R."/>
            <person name="Peterson J.D."/>
            <person name="Kelley J.M."/>
            <person name="Cotton M.D."/>
            <person name="Weidman J.F."/>
            <person name="Fujii C."/>
            <person name="Bowman C."/>
            <person name="Watthey L."/>
            <person name="Wallin E."/>
            <person name="Hayes W.S."/>
            <person name="Borodovsky M."/>
            <person name="Karp P.D."/>
            <person name="Smith H.O."/>
            <person name="Fraser C.M."/>
            <person name="Venter J.C."/>
        </authorList>
    </citation>
    <scope>NUCLEOTIDE SEQUENCE [LARGE SCALE GENOMIC DNA]</scope>
    <source>
        <strain>ATCC 700392 / 26695</strain>
    </source>
</reference>
<evidence type="ECO:0000255" key="1">
    <source>
        <dbReference type="HAMAP-Rule" id="MF_00071"/>
    </source>
</evidence>
<proteinExistence type="inferred from homology"/>
<protein>
    <recommendedName>
        <fullName evidence="1">Elongation factor 4</fullName>
        <shortName evidence="1">EF-4</shortName>
        <ecNumber evidence="1">3.6.5.n1</ecNumber>
    </recommendedName>
    <alternativeName>
        <fullName evidence="1">Ribosomal back-translocase LepA</fullName>
    </alternativeName>
</protein>
<organism>
    <name type="scientific">Helicobacter pylori (strain ATCC 700392 / 26695)</name>
    <name type="common">Campylobacter pylori</name>
    <dbReference type="NCBI Taxonomy" id="85962"/>
    <lineage>
        <taxon>Bacteria</taxon>
        <taxon>Pseudomonadati</taxon>
        <taxon>Campylobacterota</taxon>
        <taxon>Epsilonproteobacteria</taxon>
        <taxon>Campylobacterales</taxon>
        <taxon>Helicobacteraceae</taxon>
        <taxon>Helicobacter</taxon>
    </lineage>
</organism>
<keyword id="KW-0997">Cell inner membrane</keyword>
<keyword id="KW-1003">Cell membrane</keyword>
<keyword id="KW-0342">GTP-binding</keyword>
<keyword id="KW-0378">Hydrolase</keyword>
<keyword id="KW-0472">Membrane</keyword>
<keyword id="KW-0547">Nucleotide-binding</keyword>
<keyword id="KW-0648">Protein biosynthesis</keyword>
<keyword id="KW-1185">Reference proteome</keyword>
<sequence>MKTKAPMKNIRNFSIIAHIDHGKSTLADCLISECNAISNREMKSQVMDTMDIEKERGITIKAQSVRLNYTFKGEDYVLNLIDTPGHVDFSYEVSRSLCSCEGALLVVDATQGVEAQTIANTYIALDNHLEILPVINKIDLPNANVLEVKQDIEDTIGIDCSNTNEVSAKARLGIKDLLEKIITTIPAPSGDFNAPLKALIYDSWFDNYLGALALVRIMDGSINTEQEILVMGTGKKHGVLGLYYPNPLKKIPTKSLECGEIGIVSLGLKSVTDIAVGDTLTDAKNPTSKPIEGFMPAKPFVFAGLYPIETDRFEDLREALLKLQLNDCALNFEPESSVALGFGFRVGFLGLLHMEVIKERLEREFGLNLIATAPTVVYEVHLTDNSIKYVQNPSELPPENCIACIKEPFVRATIITPSEFLGNLMQLLNNKRGIQEKMEYLNQSRVMLTYSLPSNEIVMDFYDKLKSCTKGYASFDYEPIENREANLVKLDVRVAGDVVDALSIIIDKNKAYEKGRALVETMKELIPRQLFEVAIQASVGNKIIARETIKSVGKNVTAKCYGGDITRKRKLLEKQKEGKKRMKAIGKVELPQEAFLAILKID</sequence>